<evidence type="ECO:0000250" key="1"/>
<evidence type="ECO:0000256" key="2">
    <source>
        <dbReference type="SAM" id="MobiDB-lite"/>
    </source>
</evidence>
<evidence type="ECO:0000303" key="3">
    <source>
    </source>
</evidence>
<evidence type="ECO:0000305" key="4"/>
<name>FLO_ANTMA</name>
<feature type="chain" id="PRO_0000129146" description="Floricaula protein">
    <location>
        <begin position="1"/>
        <end position="396"/>
    </location>
</feature>
<feature type="DNA-binding region" evidence="1">
    <location>
        <begin position="221"/>
        <end position="225"/>
    </location>
</feature>
<feature type="DNA-binding region" evidence="1">
    <location>
        <begin position="290"/>
        <end position="297"/>
    </location>
</feature>
<feature type="DNA-binding region" evidence="1">
    <location>
        <begin position="361"/>
        <end position="364"/>
    </location>
</feature>
<feature type="region of interest" description="Disordered" evidence="2">
    <location>
        <begin position="144"/>
        <end position="223"/>
    </location>
</feature>
<feature type="compositionally biased region" description="Basic residues" evidence="2">
    <location>
        <begin position="178"/>
        <end position="190"/>
    </location>
</feature>
<feature type="compositionally biased region" description="Acidic residues" evidence="2">
    <location>
        <begin position="195"/>
        <end position="215"/>
    </location>
</feature>
<feature type="site" description="Interaction with DNA" evidence="1">
    <location>
        <position position="268"/>
    </location>
</feature>
<feature type="site" description="Interaction with DNA" evidence="1">
    <location>
        <position position="275"/>
    </location>
</feature>
<feature type="site" description="Interaction with DNA" evidence="1">
    <location>
        <position position="279"/>
    </location>
</feature>
<feature type="site" description="Interaction with DNA" evidence="1">
    <location>
        <position position="326"/>
    </location>
</feature>
<feature type="splice variant" id="VSP_001562" description="In isoform 2." evidence="3">
    <original>E</original>
    <variation>EV</variation>
    <location>
        <position position="143"/>
    </location>
</feature>
<protein>
    <recommendedName>
        <fullName>Floricaula protein</fullName>
    </recommendedName>
</protein>
<proteinExistence type="evidence at transcript level"/>
<organism>
    <name type="scientific">Antirrhinum majus</name>
    <name type="common">Garden snapdragon</name>
    <dbReference type="NCBI Taxonomy" id="4151"/>
    <lineage>
        <taxon>Eukaryota</taxon>
        <taxon>Viridiplantae</taxon>
        <taxon>Streptophyta</taxon>
        <taxon>Embryophyta</taxon>
        <taxon>Tracheophyta</taxon>
        <taxon>Spermatophyta</taxon>
        <taxon>Magnoliopsida</taxon>
        <taxon>eudicotyledons</taxon>
        <taxon>Gunneridae</taxon>
        <taxon>Pentapetalae</taxon>
        <taxon>asterids</taxon>
        <taxon>lamiids</taxon>
        <taxon>Lamiales</taxon>
        <taxon>Plantaginaceae</taxon>
        <taxon>Antirrhineae</taxon>
        <taxon>Antirrhinum</taxon>
    </lineage>
</organism>
<sequence length="396" mass="44790">MDPDAFLFKWDHRTALPQPNRLLDAVAPPPPPPPQAPSYSMRPRELGGLEELFQAYGIRYYTAAKIAELGFTVNTLLDMRDEELDEMMNSLCQIFRWDLLVGERYGIKAAVRAERRRIDEEEVRRRHLLLGDTTHALDALSQEGLSEEPVQQEKEAMGSGGGGVGGVWEMMGAGGRKAPQRRRKNYKGRSRMASMEEDDDDDDDETEGAEDDENIVSERQREHPFIVTEPGEVARGKKNGLDYLFHLYEQCRDFLIQVQTIAKERGEKCPTKVTNQVFRYAKKAGANYINKPKMRHYVHCYALHCLDEAASNALRRAFKERGENVGAWRQACYKPLVAIAARQGWDIDTIFNAHPRLSIWYVPTKLRQLCHAERSSAAVAATSSITGGGPADHLPF</sequence>
<reference key="1">
    <citation type="journal article" date="1990" name="Cell">
        <title>Floricaula: a homeotic gene required for flower development in Antirrhinum majus.</title>
        <authorList>
            <person name="Coen E.S."/>
            <person name="Romero J.M."/>
            <person name="Doyle S."/>
            <person name="Elliott R."/>
            <person name="Murphy G."/>
            <person name="Carpenter R."/>
        </authorList>
    </citation>
    <scope>NUCLEOTIDE SEQUENCE [MRNA] (ISOFORMS 1 AND 2)</scope>
</reference>
<accession>P23915</accession>
<comment type="function">
    <text>Required for flower development. FLO may interact in a sequential manner with other homeotic genes affecting floral organ identity.</text>
</comment>
<comment type="subcellular location">
    <subcellularLocation>
        <location evidence="4">Nucleus</location>
    </subcellularLocation>
</comment>
<comment type="alternative products">
    <event type="alternative splicing"/>
    <isoform>
        <id>P23915-1</id>
        <name>1</name>
        <sequence type="displayed"/>
    </isoform>
    <isoform>
        <id>P23915-2</id>
        <name>2</name>
        <sequence type="described" ref="VSP_001562"/>
    </isoform>
</comment>
<comment type="tissue specificity">
    <text>Bract, sepal, petal, and carpel primordia, but not in stamen primordia.</text>
</comment>
<comment type="developmental stage">
    <text>Transiently expressed in the very early stages of flower development.</text>
</comment>
<comment type="similarity">
    <text evidence="4">Belongs to the FLO/LFY family.</text>
</comment>
<gene>
    <name type="primary">FLO</name>
</gene>
<keyword id="KW-0010">Activator</keyword>
<keyword id="KW-0025">Alternative splicing</keyword>
<keyword id="KW-0217">Developmental protein</keyword>
<keyword id="KW-0221">Differentiation</keyword>
<keyword id="KW-0238">DNA-binding</keyword>
<keyword id="KW-0287">Flowering</keyword>
<keyword id="KW-0539">Nucleus</keyword>
<keyword id="KW-0804">Transcription</keyword>
<keyword id="KW-0805">Transcription regulation</keyword>
<dbReference type="EMBL" id="M55525">
    <property type="protein sequence ID" value="AAA62574.1"/>
    <property type="molecule type" value="mRNA"/>
</dbReference>
<dbReference type="PIR" id="A36339">
    <property type="entry name" value="A36339"/>
</dbReference>
<dbReference type="SMR" id="P23915"/>
<dbReference type="GO" id="GO:0005634">
    <property type="term" value="C:nucleus"/>
    <property type="evidence" value="ECO:0007669"/>
    <property type="project" value="UniProtKB-SubCell"/>
</dbReference>
<dbReference type="GO" id="GO:0003677">
    <property type="term" value="F:DNA binding"/>
    <property type="evidence" value="ECO:0007669"/>
    <property type="project" value="UniProtKB-KW"/>
</dbReference>
<dbReference type="GO" id="GO:0030154">
    <property type="term" value="P:cell differentiation"/>
    <property type="evidence" value="ECO:0007669"/>
    <property type="project" value="UniProtKB-KW"/>
</dbReference>
<dbReference type="GO" id="GO:0009908">
    <property type="term" value="P:flower development"/>
    <property type="evidence" value="ECO:0007669"/>
    <property type="project" value="UniProtKB-KW"/>
</dbReference>
<dbReference type="GO" id="GO:0006355">
    <property type="term" value="P:regulation of DNA-templated transcription"/>
    <property type="evidence" value="ECO:0007669"/>
    <property type="project" value="InterPro"/>
</dbReference>
<dbReference type="Gene3D" id="1.10.4180.10">
    <property type="entry name" value="Protein LEAFY"/>
    <property type="match status" value="1"/>
</dbReference>
<dbReference type="InterPro" id="IPR035209">
    <property type="entry name" value="FLO/LFY_C"/>
</dbReference>
<dbReference type="InterPro" id="IPR002910">
    <property type="entry name" value="FLO_LFY"/>
</dbReference>
<dbReference type="InterPro" id="IPR038276">
    <property type="entry name" value="Floricaula/leafy_C_sf"/>
</dbReference>
<dbReference type="InterPro" id="IPR035079">
    <property type="entry name" value="LFY_SAM"/>
</dbReference>
<dbReference type="PANTHER" id="PTHR36079">
    <property type="entry name" value="PROTEIN LEAFY"/>
    <property type="match status" value="1"/>
</dbReference>
<dbReference type="PANTHER" id="PTHR36079:SF1">
    <property type="entry name" value="PROTEIN LEAFY"/>
    <property type="match status" value="1"/>
</dbReference>
<dbReference type="Pfam" id="PF17538">
    <property type="entry name" value="C_LFY_FLO"/>
    <property type="match status" value="1"/>
</dbReference>
<dbReference type="Pfam" id="PF01698">
    <property type="entry name" value="SAM_LFY"/>
    <property type="match status" value="1"/>
</dbReference>